<accession>P0C173</accession>
<proteinExistence type="evidence at protein level"/>
<dbReference type="SMR" id="P0C173"/>
<dbReference type="GO" id="GO:0005576">
    <property type="term" value="C:extracellular region"/>
    <property type="evidence" value="ECO:0007669"/>
    <property type="project" value="UniProtKB-SubCell"/>
</dbReference>
<dbReference type="GO" id="GO:0008200">
    <property type="term" value="F:ion channel inhibitor activity"/>
    <property type="evidence" value="ECO:0007669"/>
    <property type="project" value="InterPro"/>
</dbReference>
<dbReference type="GO" id="GO:0015459">
    <property type="term" value="F:potassium channel regulator activity"/>
    <property type="evidence" value="ECO:0007669"/>
    <property type="project" value="UniProtKB-KW"/>
</dbReference>
<dbReference type="GO" id="GO:0090729">
    <property type="term" value="F:toxin activity"/>
    <property type="evidence" value="ECO:0007669"/>
    <property type="project" value="UniProtKB-KW"/>
</dbReference>
<dbReference type="Gene3D" id="3.30.30.10">
    <property type="entry name" value="Knottin, scorpion toxin-like"/>
    <property type="match status" value="1"/>
</dbReference>
<dbReference type="InterPro" id="IPR036574">
    <property type="entry name" value="Scorpion_toxin-like_sf"/>
</dbReference>
<dbReference type="InterPro" id="IPR001947">
    <property type="entry name" value="Scorpion_toxinS_K_inh"/>
</dbReference>
<dbReference type="Pfam" id="PF00451">
    <property type="entry name" value="Toxin_2"/>
    <property type="match status" value="1"/>
</dbReference>
<dbReference type="SUPFAM" id="SSF57095">
    <property type="entry name" value="Scorpion toxin-like"/>
    <property type="match status" value="1"/>
</dbReference>
<dbReference type="PROSITE" id="PS01138">
    <property type="entry name" value="SCORP_SHORT_TOXIN"/>
    <property type="match status" value="1"/>
</dbReference>
<reference key="1">
    <citation type="journal article" date="1997" name="Toxicon">
        <title>Tamulotoxin, a novel member of potassium channel active short toxins from the venom of the indian red scorpion Buthus tamulus.</title>
        <authorList>
            <person name="Escoubas P."/>
            <person name="Romi-Lebrun R."/>
            <person name="Lebrun B."/>
            <person name="Herrmann R."/>
            <person name="Moskowitz H."/>
            <person name="Rajendra W."/>
            <person name="Hammock B."/>
            <person name="Nakajima T."/>
        </authorList>
    </citation>
    <scope>PROTEIN SEQUENCE</scope>
    <scope>SYNTHESIS</scope>
    <source>
        <tissue>Venom</tissue>
    </source>
</reference>
<comment type="function">
    <text evidence="1">Blocks calcium-activated potassium channels.</text>
</comment>
<comment type="subcellular location">
    <subcellularLocation>
        <location>Secreted</location>
    </subcellularLocation>
</comment>
<comment type="tissue specificity">
    <text>Expressed by the venom gland.</text>
</comment>
<comment type="domain">
    <text evidence="2">Has the structural arrangement of an alpha-helix connected to antiparallel beta-sheets by disulfide bonds (CS-alpha/beta).</text>
</comment>
<comment type="similarity">
    <text evidence="2">Belongs to the short scorpion toxin superfamily. Potassium channel inhibitor family. Alpha-KTx 16 subfamily.</text>
</comment>
<feature type="chain" id="PRO_0000227816" description="Potassium channel toxin alpha-KTx 16.1">
    <location>
        <begin position="1"/>
        <end position="36"/>
    </location>
</feature>
<feature type="site" description="Basic residue of the functional dyad" evidence="1">
    <location>
        <position position="27"/>
    </location>
</feature>
<feature type="site" description="Aromatic residue of the functional dyad" evidence="1">
    <location>
        <position position="36"/>
    </location>
</feature>
<feature type="disulfide bond" evidence="1">
    <location>
        <begin position="7"/>
        <end position="28"/>
    </location>
</feature>
<feature type="disulfide bond" evidence="1">
    <location>
        <begin position="13"/>
        <end position="33"/>
    </location>
</feature>
<feature type="disulfide bond" evidence="1">
    <location>
        <begin position="17"/>
        <end position="35"/>
    </location>
</feature>
<protein>
    <recommendedName>
        <fullName>Potassium channel toxin alpha-KTx 16.1</fullName>
    </recommendedName>
    <alternativeName>
        <fullName>Alpha-KTx 1.8</fullName>
    </alternativeName>
    <alternativeName>
        <fullName>Tamulotoxin</fullName>
        <shortName>TmTX</shortName>
    </alternativeName>
</protein>
<evidence type="ECO:0000250" key="1"/>
<evidence type="ECO:0000305" key="2"/>
<sequence>DLIDVKCISSQECWIACKKVTGRFEGKCQNRQCRCY</sequence>
<organism>
    <name type="scientific">Hottentotta tamulus</name>
    <name type="common">Eastern Indian scorpion</name>
    <name type="synonym">Mesobuthus tamulus</name>
    <dbReference type="NCBI Taxonomy" id="34647"/>
    <lineage>
        <taxon>Eukaryota</taxon>
        <taxon>Metazoa</taxon>
        <taxon>Ecdysozoa</taxon>
        <taxon>Arthropoda</taxon>
        <taxon>Chelicerata</taxon>
        <taxon>Arachnida</taxon>
        <taxon>Scorpiones</taxon>
        <taxon>Buthida</taxon>
        <taxon>Buthoidea</taxon>
        <taxon>Buthidae</taxon>
        <taxon>Mesobuthus</taxon>
    </lineage>
</organism>
<name>KA161_HOTTA</name>
<keyword id="KW-1221">Calcium-activated potassium channel impairing toxin</keyword>
<keyword id="KW-0903">Direct protein sequencing</keyword>
<keyword id="KW-1015">Disulfide bond</keyword>
<keyword id="KW-0872">Ion channel impairing toxin</keyword>
<keyword id="KW-0528">Neurotoxin</keyword>
<keyword id="KW-0632">Potassium channel impairing toxin</keyword>
<keyword id="KW-0964">Secreted</keyword>
<keyword id="KW-0800">Toxin</keyword>